<accession>Q32FE8</accession>
<name>CNU_SHIDS</name>
<sequence length="71" mass="8417">MTVQDYLLKFRKISSLESLEKLYDHLNYTLTDDQELINMYRAADHRRAELVSGGRLFDLGQVPKSVWHYVQ</sequence>
<dbReference type="EMBL" id="CP000034">
    <property type="protein sequence ID" value="ABB61957.1"/>
    <property type="molecule type" value="Genomic_DNA"/>
</dbReference>
<dbReference type="RefSeq" id="WP_000217950.1">
    <property type="nucleotide sequence ID" value="NC_007606.1"/>
</dbReference>
<dbReference type="RefSeq" id="YP_403448.1">
    <property type="nucleotide sequence ID" value="NC_007606.1"/>
</dbReference>
<dbReference type="SMR" id="Q32FE8"/>
<dbReference type="STRING" id="300267.SDY_1848"/>
<dbReference type="EnsemblBacteria" id="ABB61957">
    <property type="protein sequence ID" value="ABB61957"/>
    <property type="gene ID" value="SDY_1848"/>
</dbReference>
<dbReference type="GeneID" id="93775777"/>
<dbReference type="KEGG" id="sdy:SDY_1848"/>
<dbReference type="PATRIC" id="fig|300267.13.peg.2227"/>
<dbReference type="HOGENOM" id="CLU_190629_0_0_6"/>
<dbReference type="Proteomes" id="UP000002716">
    <property type="component" value="Chromosome"/>
</dbReference>
<dbReference type="GO" id="GO:0003677">
    <property type="term" value="F:DNA binding"/>
    <property type="evidence" value="ECO:0007669"/>
    <property type="project" value="UniProtKB-KW"/>
</dbReference>
<dbReference type="FunFam" id="1.20.1280.40:FF:000002">
    <property type="entry name" value="OriC-binding nucleoid-associated protein"/>
    <property type="match status" value="1"/>
</dbReference>
<dbReference type="Gene3D" id="1.20.1280.40">
    <property type="entry name" value="HHA"/>
    <property type="match status" value="1"/>
</dbReference>
<dbReference type="InterPro" id="IPR007985">
    <property type="entry name" value="Hemolysn_expr_modulating_HHA"/>
</dbReference>
<dbReference type="InterPro" id="IPR036666">
    <property type="entry name" value="HHA_sf"/>
</dbReference>
<dbReference type="NCBIfam" id="NF007703">
    <property type="entry name" value="PRK10391.1"/>
    <property type="match status" value="1"/>
</dbReference>
<dbReference type="Pfam" id="PF05321">
    <property type="entry name" value="HHA"/>
    <property type="match status" value="1"/>
</dbReference>
<dbReference type="SUPFAM" id="SSF68989">
    <property type="entry name" value="Hemolysin expression modulating protein HHA"/>
    <property type="match status" value="1"/>
</dbReference>
<protein>
    <recommendedName>
        <fullName>OriC-binding nucleoid-associated protein</fullName>
    </recommendedName>
    <alternativeName>
        <fullName>H-NS/StpA-binding protein 2</fullName>
    </alternativeName>
    <alternativeName>
        <fullName>Transcription modulator YdgT</fullName>
    </alternativeName>
</protein>
<gene>
    <name type="primary">cnu</name>
    <name type="synonym">ydgT</name>
    <name type="ordered locus">SDY_1848</name>
</gene>
<evidence type="ECO:0000250" key="1"/>
<evidence type="ECO:0000250" key="2">
    <source>
        <dbReference type="UniProtKB" id="P64467"/>
    </source>
</evidence>
<evidence type="ECO:0000305" key="3"/>
<reference key="1">
    <citation type="journal article" date="2005" name="Nucleic Acids Res.">
        <title>Genome dynamics and diversity of Shigella species, the etiologic agents of bacillary dysentery.</title>
        <authorList>
            <person name="Yang F."/>
            <person name="Yang J."/>
            <person name="Zhang X."/>
            <person name="Chen L."/>
            <person name="Jiang Y."/>
            <person name="Yan Y."/>
            <person name="Tang X."/>
            <person name="Wang J."/>
            <person name="Xiong Z."/>
            <person name="Dong J."/>
            <person name="Xue Y."/>
            <person name="Zhu Y."/>
            <person name="Xu X."/>
            <person name="Sun L."/>
            <person name="Chen S."/>
            <person name="Nie H."/>
            <person name="Peng J."/>
            <person name="Xu J."/>
            <person name="Wang Y."/>
            <person name="Yuan Z."/>
            <person name="Wen Y."/>
            <person name="Yao Z."/>
            <person name="Shen Y."/>
            <person name="Qiang B."/>
            <person name="Hou Y."/>
            <person name="Yu J."/>
            <person name="Jin Q."/>
        </authorList>
    </citation>
    <scope>NUCLEOTIDE SEQUENCE [LARGE SCALE GENOMIC DNA]</scope>
    <source>
        <strain>Sd197</strain>
    </source>
</reference>
<feature type="chain" id="PRO_0000305053" description="OriC-binding nucleoid-associated protein">
    <location>
        <begin position="1"/>
        <end position="71"/>
    </location>
</feature>
<feature type="site" description="Interacts with H-NS" evidence="1">
    <location>
        <position position="44"/>
    </location>
</feature>
<organism>
    <name type="scientific">Shigella dysenteriae serotype 1 (strain Sd197)</name>
    <dbReference type="NCBI Taxonomy" id="300267"/>
    <lineage>
        <taxon>Bacteria</taxon>
        <taxon>Pseudomonadati</taxon>
        <taxon>Pseudomonadota</taxon>
        <taxon>Gammaproteobacteria</taxon>
        <taxon>Enterobacterales</taxon>
        <taxon>Enterobacteriaceae</taxon>
        <taxon>Shigella</taxon>
    </lineage>
</organism>
<comment type="function">
    <text evidence="2">Modifies the set of genes regulated by H-NS; Hha and cnu (YdgT) increase the number of genes bound by H-NS/StpA and may also modulate the oligomerization of the H-NS/StpA-complex on DNA. The complex formed with H-NS binds to the specific 26-bp cnb site in the origin of replication oriC.</text>
</comment>
<comment type="subunit">
    <text evidence="2">Forms complexes with both H-NS and StpA.</text>
</comment>
<comment type="similarity">
    <text evidence="3">Belongs to the Hha/YmoA/Cnu family.</text>
</comment>
<keyword id="KW-0238">DNA-binding</keyword>
<keyword id="KW-1185">Reference proteome</keyword>
<keyword id="KW-0804">Transcription</keyword>
<keyword id="KW-0805">Transcription regulation</keyword>
<proteinExistence type="inferred from homology"/>